<sequence length="412" mass="47368">MSLIGRLNLGRRFCTAVPRRSEDIMSNPDCRPSDLCLRVSYLIRCVGDLDTAAKYARLAVFTSIKSESTTTICQSIIGGMLRDKRLKDAYDLYEFFFNQHNLRPNSHCWNYIIESGFQQGLVNDALHFHHRCINSGQVHDYPSDDSFRILTKGLVHSGRLDQAEAFLRGRTVNRTTYPDHVAYNNLIRGFLDLGNFKKANLVLGEFKRLFLIALSETKDDLHHSNYENRVAFLMATFMEYWFKQGKQVEAMECYNRCVLSNRLLVCAETGNALLKVLLKYGEKKNAWALYHELLDKNGTGKGCLDSDTIKIMVDECFDMGWFSEAMETYKKARPKNDYLSDKYIITRFCENRMLSEAESVFVDSLADDFGYIDVNTYKTMIDAYVKAGRIHDAIKTSNKMIDATLKEVSHLF</sequence>
<keyword id="KW-0496">Mitochondrion</keyword>
<keyword id="KW-1185">Reference proteome</keyword>
<keyword id="KW-0677">Repeat</keyword>
<keyword id="KW-0809">Transit peptide</keyword>
<organism>
    <name type="scientific">Arabidopsis thaliana</name>
    <name type="common">Mouse-ear cress</name>
    <dbReference type="NCBI Taxonomy" id="3702"/>
    <lineage>
        <taxon>Eukaryota</taxon>
        <taxon>Viridiplantae</taxon>
        <taxon>Streptophyta</taxon>
        <taxon>Embryophyta</taxon>
        <taxon>Tracheophyta</taxon>
        <taxon>Spermatophyta</taxon>
        <taxon>Magnoliopsida</taxon>
        <taxon>eudicotyledons</taxon>
        <taxon>Gunneridae</taxon>
        <taxon>Pentapetalae</taxon>
        <taxon>rosids</taxon>
        <taxon>malvids</taxon>
        <taxon>Brassicales</taxon>
        <taxon>Brassicaceae</taxon>
        <taxon>Camelineae</taxon>
        <taxon>Arabidopsis</taxon>
    </lineage>
</organism>
<evidence type="ECO:0000255" key="1"/>
<evidence type="ECO:0000305" key="2"/>
<dbReference type="EMBL" id="AL358732">
    <property type="protein sequence ID" value="CAB94134.1"/>
    <property type="molecule type" value="Genomic_DNA"/>
</dbReference>
<dbReference type="EMBL" id="CP002686">
    <property type="protein sequence ID" value="AEE80134.1"/>
    <property type="molecule type" value="Genomic_DNA"/>
</dbReference>
<dbReference type="EMBL" id="AY081333">
    <property type="protein sequence ID" value="AAL91222.1"/>
    <property type="molecule type" value="mRNA"/>
</dbReference>
<dbReference type="EMBL" id="BT002139">
    <property type="protein sequence ID" value="AAN72150.1"/>
    <property type="molecule type" value="mRNA"/>
</dbReference>
<dbReference type="PIR" id="T50519">
    <property type="entry name" value="T50519"/>
</dbReference>
<dbReference type="RefSeq" id="NP_191657.1">
    <property type="nucleotide sequence ID" value="NM_115962.4"/>
</dbReference>
<dbReference type="SMR" id="Q9LEX5"/>
<dbReference type="SwissPalm" id="Q9LEX5"/>
<dbReference type="PaxDb" id="3702-AT3G60980.1"/>
<dbReference type="ProteomicsDB" id="248966"/>
<dbReference type="EnsemblPlants" id="AT3G60980.1">
    <property type="protein sequence ID" value="AT3G60980.1"/>
    <property type="gene ID" value="AT3G60980"/>
</dbReference>
<dbReference type="GeneID" id="825270"/>
<dbReference type="Gramene" id="AT3G60980.1">
    <property type="protein sequence ID" value="AT3G60980.1"/>
    <property type="gene ID" value="AT3G60980"/>
</dbReference>
<dbReference type="KEGG" id="ath:AT3G60980"/>
<dbReference type="Araport" id="AT3G60980"/>
<dbReference type="TAIR" id="AT3G60980"/>
<dbReference type="eggNOG" id="KOG4197">
    <property type="taxonomic scope" value="Eukaryota"/>
</dbReference>
<dbReference type="HOGENOM" id="CLU_036660_1_0_1"/>
<dbReference type="InParanoid" id="Q9LEX5"/>
<dbReference type="OMA" id="QVEAMEC"/>
<dbReference type="PhylomeDB" id="Q9LEX5"/>
<dbReference type="PRO" id="PR:Q9LEX5"/>
<dbReference type="Proteomes" id="UP000006548">
    <property type="component" value="Chromosome 3"/>
</dbReference>
<dbReference type="ExpressionAtlas" id="Q9LEX5">
    <property type="expression patterns" value="baseline and differential"/>
</dbReference>
<dbReference type="GO" id="GO:0005739">
    <property type="term" value="C:mitochondrion"/>
    <property type="evidence" value="ECO:0007669"/>
    <property type="project" value="UniProtKB-SubCell"/>
</dbReference>
<dbReference type="GO" id="GO:0006979">
    <property type="term" value="P:response to oxidative stress"/>
    <property type="evidence" value="ECO:0000315"/>
    <property type="project" value="TAIR"/>
</dbReference>
<dbReference type="Gene3D" id="1.25.40.10">
    <property type="entry name" value="Tetratricopeptide repeat domain"/>
    <property type="match status" value="3"/>
</dbReference>
<dbReference type="InterPro" id="IPR002885">
    <property type="entry name" value="Pentatricopeptide_rpt"/>
</dbReference>
<dbReference type="InterPro" id="IPR052308">
    <property type="entry name" value="PPR_domain-containing"/>
</dbReference>
<dbReference type="InterPro" id="IPR011990">
    <property type="entry name" value="TPR-like_helical_dom_sf"/>
</dbReference>
<dbReference type="NCBIfam" id="TIGR00756">
    <property type="entry name" value="PPR"/>
    <property type="match status" value="1"/>
</dbReference>
<dbReference type="PANTHER" id="PTHR47937:SF7">
    <property type="entry name" value="EXPORTIN-2 CENTRAL DOMAIN-CONTAINING PROTEIN"/>
    <property type="match status" value="1"/>
</dbReference>
<dbReference type="PANTHER" id="PTHR47937">
    <property type="entry name" value="PLASTID TRANSCRIPTIONALLY ACTIVE CHROMOSOME 2-LIKE PROTEIN"/>
    <property type="match status" value="1"/>
</dbReference>
<dbReference type="Pfam" id="PF01535">
    <property type="entry name" value="PPR"/>
    <property type="match status" value="2"/>
</dbReference>
<dbReference type="SUPFAM" id="SSF48452">
    <property type="entry name" value="TPR-like"/>
    <property type="match status" value="1"/>
</dbReference>
<dbReference type="PROSITE" id="PS51375">
    <property type="entry name" value="PPR"/>
    <property type="match status" value="7"/>
</dbReference>
<accession>Q9LEX5</accession>
<name>PP290_ARATH</name>
<comment type="subcellular location">
    <subcellularLocation>
        <location evidence="2">Mitochondrion</location>
    </subcellularLocation>
</comment>
<comment type="similarity">
    <text evidence="2">Belongs to the PPR family. P subfamily.</text>
</comment>
<comment type="online information" name="Pentatricopeptide repeat proteins">
    <link uri="https://ppr.plantenergy.uwa.edu.au"/>
</comment>
<protein>
    <recommendedName>
        <fullName>Pentatricopeptide repeat-containing protein At3g60980, mitochondrial</fullName>
    </recommendedName>
</protein>
<gene>
    <name type="ordered locus">At3g60980</name>
    <name type="ORF">T27I15_70</name>
</gene>
<reference key="1">
    <citation type="journal article" date="2000" name="Nature">
        <title>Sequence and analysis of chromosome 3 of the plant Arabidopsis thaliana.</title>
        <authorList>
            <person name="Salanoubat M."/>
            <person name="Lemcke K."/>
            <person name="Rieger M."/>
            <person name="Ansorge W."/>
            <person name="Unseld M."/>
            <person name="Fartmann B."/>
            <person name="Valle G."/>
            <person name="Bloecker H."/>
            <person name="Perez-Alonso M."/>
            <person name="Obermaier B."/>
            <person name="Delseny M."/>
            <person name="Boutry M."/>
            <person name="Grivell L.A."/>
            <person name="Mache R."/>
            <person name="Puigdomenech P."/>
            <person name="De Simone V."/>
            <person name="Choisne N."/>
            <person name="Artiguenave F."/>
            <person name="Robert C."/>
            <person name="Brottier P."/>
            <person name="Wincker P."/>
            <person name="Cattolico L."/>
            <person name="Weissenbach J."/>
            <person name="Saurin W."/>
            <person name="Quetier F."/>
            <person name="Schaefer M."/>
            <person name="Mueller-Auer S."/>
            <person name="Gabel C."/>
            <person name="Fuchs M."/>
            <person name="Benes V."/>
            <person name="Wurmbach E."/>
            <person name="Drzonek H."/>
            <person name="Erfle H."/>
            <person name="Jordan N."/>
            <person name="Bangert S."/>
            <person name="Wiedelmann R."/>
            <person name="Kranz H."/>
            <person name="Voss H."/>
            <person name="Holland R."/>
            <person name="Brandt P."/>
            <person name="Nyakatura G."/>
            <person name="Vezzi A."/>
            <person name="D'Angelo M."/>
            <person name="Pallavicini A."/>
            <person name="Toppo S."/>
            <person name="Simionati B."/>
            <person name="Conrad A."/>
            <person name="Hornischer K."/>
            <person name="Kauer G."/>
            <person name="Loehnert T.-H."/>
            <person name="Nordsiek G."/>
            <person name="Reichelt J."/>
            <person name="Scharfe M."/>
            <person name="Schoen O."/>
            <person name="Bargues M."/>
            <person name="Terol J."/>
            <person name="Climent J."/>
            <person name="Navarro P."/>
            <person name="Collado C."/>
            <person name="Perez-Perez A."/>
            <person name="Ottenwaelder B."/>
            <person name="Duchemin D."/>
            <person name="Cooke R."/>
            <person name="Laudie M."/>
            <person name="Berger-Llauro C."/>
            <person name="Purnelle B."/>
            <person name="Masuy D."/>
            <person name="de Haan M."/>
            <person name="Maarse A.C."/>
            <person name="Alcaraz J.-P."/>
            <person name="Cottet A."/>
            <person name="Casacuberta E."/>
            <person name="Monfort A."/>
            <person name="Argiriou A."/>
            <person name="Flores M."/>
            <person name="Liguori R."/>
            <person name="Vitale D."/>
            <person name="Mannhaupt G."/>
            <person name="Haase D."/>
            <person name="Schoof H."/>
            <person name="Rudd S."/>
            <person name="Zaccaria P."/>
            <person name="Mewes H.-W."/>
            <person name="Mayer K.F.X."/>
            <person name="Kaul S."/>
            <person name="Town C.D."/>
            <person name="Koo H.L."/>
            <person name="Tallon L.J."/>
            <person name="Jenkins J."/>
            <person name="Rooney T."/>
            <person name="Rizzo M."/>
            <person name="Walts A."/>
            <person name="Utterback T."/>
            <person name="Fujii C.Y."/>
            <person name="Shea T.P."/>
            <person name="Creasy T.H."/>
            <person name="Haas B."/>
            <person name="Maiti R."/>
            <person name="Wu D."/>
            <person name="Peterson J."/>
            <person name="Van Aken S."/>
            <person name="Pai G."/>
            <person name="Militscher J."/>
            <person name="Sellers P."/>
            <person name="Gill J.E."/>
            <person name="Feldblyum T.V."/>
            <person name="Preuss D."/>
            <person name="Lin X."/>
            <person name="Nierman W.C."/>
            <person name="Salzberg S.L."/>
            <person name="White O."/>
            <person name="Venter J.C."/>
            <person name="Fraser C.M."/>
            <person name="Kaneko T."/>
            <person name="Nakamura Y."/>
            <person name="Sato S."/>
            <person name="Kato T."/>
            <person name="Asamizu E."/>
            <person name="Sasamoto S."/>
            <person name="Kimura T."/>
            <person name="Idesawa K."/>
            <person name="Kawashima K."/>
            <person name="Kishida Y."/>
            <person name="Kiyokawa C."/>
            <person name="Kohara M."/>
            <person name="Matsumoto M."/>
            <person name="Matsuno A."/>
            <person name="Muraki A."/>
            <person name="Nakayama S."/>
            <person name="Nakazaki N."/>
            <person name="Shinpo S."/>
            <person name="Takeuchi C."/>
            <person name="Wada T."/>
            <person name="Watanabe A."/>
            <person name="Yamada M."/>
            <person name="Yasuda M."/>
            <person name="Tabata S."/>
        </authorList>
    </citation>
    <scope>NUCLEOTIDE SEQUENCE [LARGE SCALE GENOMIC DNA]</scope>
    <source>
        <strain>cv. Columbia</strain>
    </source>
</reference>
<reference key="2">
    <citation type="journal article" date="2017" name="Plant J.">
        <title>Araport11: a complete reannotation of the Arabidopsis thaliana reference genome.</title>
        <authorList>
            <person name="Cheng C.Y."/>
            <person name="Krishnakumar V."/>
            <person name="Chan A.P."/>
            <person name="Thibaud-Nissen F."/>
            <person name="Schobel S."/>
            <person name="Town C.D."/>
        </authorList>
    </citation>
    <scope>GENOME REANNOTATION</scope>
    <source>
        <strain>cv. Columbia</strain>
    </source>
</reference>
<reference key="3">
    <citation type="journal article" date="2003" name="Science">
        <title>Empirical analysis of transcriptional activity in the Arabidopsis genome.</title>
        <authorList>
            <person name="Yamada K."/>
            <person name="Lim J."/>
            <person name="Dale J.M."/>
            <person name="Chen H."/>
            <person name="Shinn P."/>
            <person name="Palm C.J."/>
            <person name="Southwick A.M."/>
            <person name="Wu H.C."/>
            <person name="Kim C.J."/>
            <person name="Nguyen M."/>
            <person name="Pham P.K."/>
            <person name="Cheuk R.F."/>
            <person name="Karlin-Newmann G."/>
            <person name="Liu S.X."/>
            <person name="Lam B."/>
            <person name="Sakano H."/>
            <person name="Wu T."/>
            <person name="Yu G."/>
            <person name="Miranda M."/>
            <person name="Quach H.L."/>
            <person name="Tripp M."/>
            <person name="Chang C.H."/>
            <person name="Lee J.M."/>
            <person name="Toriumi M.J."/>
            <person name="Chan M.M."/>
            <person name="Tang C.C."/>
            <person name="Onodera C.S."/>
            <person name="Deng J.M."/>
            <person name="Akiyama K."/>
            <person name="Ansari Y."/>
            <person name="Arakawa T."/>
            <person name="Banh J."/>
            <person name="Banno F."/>
            <person name="Bowser L."/>
            <person name="Brooks S.Y."/>
            <person name="Carninci P."/>
            <person name="Chao Q."/>
            <person name="Choy N."/>
            <person name="Enju A."/>
            <person name="Goldsmith A.D."/>
            <person name="Gurjal M."/>
            <person name="Hansen N.F."/>
            <person name="Hayashizaki Y."/>
            <person name="Johnson-Hopson C."/>
            <person name="Hsuan V.W."/>
            <person name="Iida K."/>
            <person name="Karnes M."/>
            <person name="Khan S."/>
            <person name="Koesema E."/>
            <person name="Ishida J."/>
            <person name="Jiang P.X."/>
            <person name="Jones T."/>
            <person name="Kawai J."/>
            <person name="Kamiya A."/>
            <person name="Meyers C."/>
            <person name="Nakajima M."/>
            <person name="Narusaka M."/>
            <person name="Seki M."/>
            <person name="Sakurai T."/>
            <person name="Satou M."/>
            <person name="Tamse R."/>
            <person name="Vaysberg M."/>
            <person name="Wallender E.K."/>
            <person name="Wong C."/>
            <person name="Yamamura Y."/>
            <person name="Yuan S."/>
            <person name="Shinozaki K."/>
            <person name="Davis R.W."/>
            <person name="Theologis A."/>
            <person name="Ecker J.R."/>
        </authorList>
    </citation>
    <scope>NUCLEOTIDE SEQUENCE [LARGE SCALE MRNA]</scope>
    <source>
        <strain>cv. Columbia</strain>
    </source>
</reference>
<reference key="4">
    <citation type="journal article" date="2004" name="Plant Cell">
        <title>Genome-wide analysis of Arabidopsis pentatricopeptide repeat proteins reveals their essential role in organelle biogenesis.</title>
        <authorList>
            <person name="Lurin C."/>
            <person name="Andres C."/>
            <person name="Aubourg S."/>
            <person name="Bellaoui M."/>
            <person name="Bitton F."/>
            <person name="Bruyere C."/>
            <person name="Caboche M."/>
            <person name="Debast C."/>
            <person name="Gualberto J."/>
            <person name="Hoffmann B."/>
            <person name="Lecharny A."/>
            <person name="Le Ret M."/>
            <person name="Martin-Magniette M.-L."/>
            <person name="Mireau H."/>
            <person name="Peeters N."/>
            <person name="Renou J.-P."/>
            <person name="Szurek B."/>
            <person name="Taconnat L."/>
            <person name="Small I."/>
        </authorList>
    </citation>
    <scope>GENE FAMILY</scope>
</reference>
<feature type="transit peptide" description="Mitochondrion" evidence="1">
    <location>
        <begin position="1"/>
        <end position="18"/>
    </location>
</feature>
<feature type="chain" id="PRO_0000356149" description="Pentatricopeptide repeat-containing protein At3g60980, mitochondrial">
    <location>
        <begin position="19"/>
        <end position="412"/>
    </location>
</feature>
<feature type="repeat" description="PPR 1">
    <location>
        <begin position="69"/>
        <end position="104"/>
    </location>
</feature>
<feature type="repeat" description="PPR 2">
    <location>
        <begin position="105"/>
        <end position="139"/>
    </location>
</feature>
<feature type="repeat" description="PPR 3">
    <location>
        <begin position="143"/>
        <end position="178"/>
    </location>
</feature>
<feature type="repeat" description="PPR 4">
    <location>
        <begin position="179"/>
        <end position="213"/>
    </location>
</feature>
<feature type="repeat" description="PPR 5">
    <location>
        <begin position="230"/>
        <end position="264"/>
    </location>
</feature>
<feature type="repeat" description="PPR 6">
    <location>
        <begin position="266"/>
        <end position="296"/>
    </location>
</feature>
<feature type="repeat" description="PPR 7">
    <location>
        <begin position="305"/>
        <end position="339"/>
    </location>
</feature>
<feature type="repeat" description="PPR 8">
    <location>
        <begin position="344"/>
        <end position="371"/>
    </location>
</feature>
<feature type="repeat" description="PPR 9">
    <location>
        <begin position="373"/>
        <end position="407"/>
    </location>
</feature>
<proteinExistence type="evidence at transcript level"/>